<feature type="chain" id="PRO_0000113433" description="Malate dehydrogenase">
    <location>
        <begin position="1"/>
        <end position="314"/>
    </location>
</feature>
<feature type="active site" description="Proton acceptor" evidence="1">
    <location>
        <position position="180"/>
    </location>
</feature>
<feature type="binding site" evidence="1">
    <location>
        <begin position="12"/>
        <end position="17"/>
    </location>
    <ligand>
        <name>NAD(+)</name>
        <dbReference type="ChEBI" id="CHEBI:57540"/>
    </ligand>
</feature>
<feature type="binding site" evidence="1">
    <location>
        <position position="36"/>
    </location>
    <ligand>
        <name>NAD(+)</name>
        <dbReference type="ChEBI" id="CHEBI:57540"/>
    </ligand>
</feature>
<feature type="binding site" evidence="1">
    <location>
        <position position="87"/>
    </location>
    <ligand>
        <name>substrate</name>
    </ligand>
</feature>
<feature type="binding site" evidence="1">
    <location>
        <position position="93"/>
    </location>
    <ligand>
        <name>substrate</name>
    </ligand>
</feature>
<feature type="binding site" evidence="1">
    <location>
        <position position="100"/>
    </location>
    <ligand>
        <name>NAD(+)</name>
        <dbReference type="ChEBI" id="CHEBI:57540"/>
    </ligand>
</feature>
<feature type="binding site" evidence="1">
    <location>
        <begin position="123"/>
        <end position="125"/>
    </location>
    <ligand>
        <name>NAD(+)</name>
        <dbReference type="ChEBI" id="CHEBI:57540"/>
    </ligand>
</feature>
<feature type="binding site" evidence="1">
    <location>
        <position position="125"/>
    </location>
    <ligand>
        <name>substrate</name>
    </ligand>
</feature>
<feature type="binding site" evidence="1">
    <location>
        <position position="156"/>
    </location>
    <ligand>
        <name>substrate</name>
    </ligand>
</feature>
<feature type="modified residue" description="Phosphoserine" evidence="1">
    <location>
        <position position="149"/>
    </location>
</feature>
<name>MDH_SHOC1</name>
<keyword id="KW-0520">NAD</keyword>
<keyword id="KW-0560">Oxidoreductase</keyword>
<keyword id="KW-0597">Phosphoprotein</keyword>
<keyword id="KW-1185">Reference proteome</keyword>
<keyword id="KW-0816">Tricarboxylic acid cycle</keyword>
<reference key="1">
    <citation type="submission" date="2003-10" db="EMBL/GenBank/DDBJ databases">
        <title>The complete genome sequence of the alkaliphilic Bacillus clausii KSM-K16.</title>
        <authorList>
            <person name="Takaki Y."/>
            <person name="Kageyama Y."/>
            <person name="Shimamura S."/>
            <person name="Suzuki H."/>
            <person name="Nishi S."/>
            <person name="Hatada Y."/>
            <person name="Kawai S."/>
            <person name="Ito S."/>
            <person name="Horikoshi K."/>
        </authorList>
    </citation>
    <scope>NUCLEOTIDE SEQUENCE [LARGE SCALE GENOMIC DNA]</scope>
    <source>
        <strain>KSM-K16</strain>
    </source>
</reference>
<comment type="function">
    <text evidence="1">Catalyzes the reversible oxidation of malate to oxaloacetate.</text>
</comment>
<comment type="catalytic activity">
    <reaction evidence="1">
        <text>(S)-malate + NAD(+) = oxaloacetate + NADH + H(+)</text>
        <dbReference type="Rhea" id="RHEA:21432"/>
        <dbReference type="ChEBI" id="CHEBI:15378"/>
        <dbReference type="ChEBI" id="CHEBI:15589"/>
        <dbReference type="ChEBI" id="CHEBI:16452"/>
        <dbReference type="ChEBI" id="CHEBI:57540"/>
        <dbReference type="ChEBI" id="CHEBI:57945"/>
        <dbReference type="EC" id="1.1.1.37"/>
    </reaction>
</comment>
<comment type="similarity">
    <text evidence="1">Belongs to the LDH/MDH superfamily. MDH type 3 family.</text>
</comment>
<gene>
    <name evidence="1" type="primary">mdh</name>
    <name type="ordered locus">ABC2713</name>
</gene>
<dbReference type="EC" id="1.1.1.37" evidence="1"/>
<dbReference type="EMBL" id="AP006627">
    <property type="protein sequence ID" value="BAD65248.1"/>
    <property type="molecule type" value="Genomic_DNA"/>
</dbReference>
<dbReference type="RefSeq" id="WP_011247556.1">
    <property type="nucleotide sequence ID" value="NC_006582.1"/>
</dbReference>
<dbReference type="SMR" id="Q5WEG2"/>
<dbReference type="STRING" id="66692.ABC2713"/>
<dbReference type="KEGG" id="bcl:ABC2713"/>
<dbReference type="eggNOG" id="COG0039">
    <property type="taxonomic scope" value="Bacteria"/>
</dbReference>
<dbReference type="HOGENOM" id="CLU_045401_2_1_9"/>
<dbReference type="OrthoDB" id="9802969at2"/>
<dbReference type="Proteomes" id="UP000001168">
    <property type="component" value="Chromosome"/>
</dbReference>
<dbReference type="GO" id="GO:0004459">
    <property type="term" value="F:L-lactate dehydrogenase activity"/>
    <property type="evidence" value="ECO:0007669"/>
    <property type="project" value="TreeGrafter"/>
</dbReference>
<dbReference type="GO" id="GO:0030060">
    <property type="term" value="F:L-malate dehydrogenase (NAD+) activity"/>
    <property type="evidence" value="ECO:0007669"/>
    <property type="project" value="UniProtKB-UniRule"/>
</dbReference>
<dbReference type="GO" id="GO:0006089">
    <property type="term" value="P:lactate metabolic process"/>
    <property type="evidence" value="ECO:0007669"/>
    <property type="project" value="TreeGrafter"/>
</dbReference>
<dbReference type="GO" id="GO:0006099">
    <property type="term" value="P:tricarboxylic acid cycle"/>
    <property type="evidence" value="ECO:0007669"/>
    <property type="project" value="UniProtKB-UniRule"/>
</dbReference>
<dbReference type="CDD" id="cd01339">
    <property type="entry name" value="LDH-like_MDH"/>
    <property type="match status" value="1"/>
</dbReference>
<dbReference type="FunFam" id="3.40.50.720:FF:000018">
    <property type="entry name" value="Malate dehydrogenase"/>
    <property type="match status" value="1"/>
</dbReference>
<dbReference type="FunFam" id="3.90.110.10:FF:000004">
    <property type="entry name" value="Malate dehydrogenase"/>
    <property type="match status" value="1"/>
</dbReference>
<dbReference type="Gene3D" id="3.90.110.10">
    <property type="entry name" value="Lactate dehydrogenase/glycoside hydrolase, family 4, C-terminal"/>
    <property type="match status" value="1"/>
</dbReference>
<dbReference type="Gene3D" id="3.40.50.720">
    <property type="entry name" value="NAD(P)-binding Rossmann-like Domain"/>
    <property type="match status" value="1"/>
</dbReference>
<dbReference type="HAMAP" id="MF_00487">
    <property type="entry name" value="Malate_dehydrog_3"/>
    <property type="match status" value="1"/>
</dbReference>
<dbReference type="InterPro" id="IPR001557">
    <property type="entry name" value="L-lactate/malate_DH"/>
</dbReference>
<dbReference type="InterPro" id="IPR022383">
    <property type="entry name" value="Lactate/malate_DH_C"/>
</dbReference>
<dbReference type="InterPro" id="IPR001236">
    <property type="entry name" value="Lactate/malate_DH_N"/>
</dbReference>
<dbReference type="InterPro" id="IPR015955">
    <property type="entry name" value="Lactate_DH/Glyco_Ohase_4_C"/>
</dbReference>
<dbReference type="InterPro" id="IPR011275">
    <property type="entry name" value="Malate_DH_type3"/>
</dbReference>
<dbReference type="InterPro" id="IPR036291">
    <property type="entry name" value="NAD(P)-bd_dom_sf"/>
</dbReference>
<dbReference type="NCBIfam" id="TIGR01763">
    <property type="entry name" value="MalateDH_bact"/>
    <property type="match status" value="1"/>
</dbReference>
<dbReference type="NCBIfam" id="NF004863">
    <property type="entry name" value="PRK06223.1"/>
    <property type="match status" value="1"/>
</dbReference>
<dbReference type="PANTHER" id="PTHR43128">
    <property type="entry name" value="L-2-HYDROXYCARBOXYLATE DEHYDROGENASE (NAD(P)(+))"/>
    <property type="match status" value="1"/>
</dbReference>
<dbReference type="PANTHER" id="PTHR43128:SF16">
    <property type="entry name" value="L-LACTATE DEHYDROGENASE"/>
    <property type="match status" value="1"/>
</dbReference>
<dbReference type="Pfam" id="PF02866">
    <property type="entry name" value="Ldh_1_C"/>
    <property type="match status" value="1"/>
</dbReference>
<dbReference type="Pfam" id="PF00056">
    <property type="entry name" value="Ldh_1_N"/>
    <property type="match status" value="1"/>
</dbReference>
<dbReference type="PIRSF" id="PIRSF000102">
    <property type="entry name" value="Lac_mal_DH"/>
    <property type="match status" value="1"/>
</dbReference>
<dbReference type="PRINTS" id="PR00086">
    <property type="entry name" value="LLDHDRGNASE"/>
</dbReference>
<dbReference type="SUPFAM" id="SSF56327">
    <property type="entry name" value="LDH C-terminal domain-like"/>
    <property type="match status" value="1"/>
</dbReference>
<dbReference type="SUPFAM" id="SSF51735">
    <property type="entry name" value="NAD(P)-binding Rossmann-fold domains"/>
    <property type="match status" value="1"/>
</dbReference>
<accession>Q5WEG2</accession>
<sequence length="314" mass="33597">MAIKRRKISVIGSGFTGATTALMVAQKELGDVVLLDIPNMEGPTKGKALDMLESTPVQGVDSTITGTSSYEDTKDSDVVVITAGIARKPGMSRDDLVATNAKIMKSVTKEVVKYSPNSYIIVLTNPADAMTYTVYKESGFPKNRVIGQSGVLDTARFRTFVAQELNVSVEDVTGFVLGGHGDDMVPLIRYSAAGGVPLTKLIAPERIEEIVERTRKGGGEIVGLLGNGSAYYAPAASLTQMVEAILKDKKRIIPTIAYLEGEYGQHDLYLGVPTILGGDGIEKVIELDLTEEEKAQLDKSVQSVRNVMAALPAE</sequence>
<organism>
    <name type="scientific">Shouchella clausii (strain KSM-K16)</name>
    <name type="common">Alkalihalobacillus clausii</name>
    <dbReference type="NCBI Taxonomy" id="66692"/>
    <lineage>
        <taxon>Bacteria</taxon>
        <taxon>Bacillati</taxon>
        <taxon>Bacillota</taxon>
        <taxon>Bacilli</taxon>
        <taxon>Bacillales</taxon>
        <taxon>Bacillaceae</taxon>
        <taxon>Shouchella</taxon>
    </lineage>
</organism>
<evidence type="ECO:0000255" key="1">
    <source>
        <dbReference type="HAMAP-Rule" id="MF_00487"/>
    </source>
</evidence>
<protein>
    <recommendedName>
        <fullName evidence="1">Malate dehydrogenase</fullName>
        <ecNumber evidence="1">1.1.1.37</ecNumber>
    </recommendedName>
</protein>
<proteinExistence type="inferred from homology"/>